<keyword id="KW-1043">Host membrane</keyword>
<keyword id="KW-0472">Membrane</keyword>
<keyword id="KW-0694">RNA-binding</keyword>
<keyword id="KW-0813">Transport</keyword>
<keyword id="KW-0916">Viral movement protein</keyword>
<evidence type="ECO:0000250" key="1"/>
<evidence type="ECO:0000305" key="2"/>
<reference key="1">
    <citation type="journal article" date="1990" name="Nucleic Acids Res.">
        <title>Nucleotide sequence of the 3'-terminal region of artichoke mottled crinkle tombusvirus RNA.</title>
        <authorList>
            <person name="Grieco F."/>
            <person name="Gallitelli D."/>
        </authorList>
    </citation>
    <scope>NUCLEOTIDE SEQUENCE [GENOMIC RNA]</scope>
    <source>
        <strain>Bari-Dr. Gallitelli isolate</strain>
    </source>
</reference>
<proteinExistence type="inferred from homology"/>
<feature type="chain" id="PRO_0000222885" description="Movement protein">
    <location>
        <begin position="1"/>
        <end position="189"/>
    </location>
</feature>
<organism>
    <name type="scientific">Artichoke mottled crinkle virus</name>
    <name type="common">AMCV</name>
    <dbReference type="NCBI Taxonomy" id="12142"/>
    <lineage>
        <taxon>Viruses</taxon>
        <taxon>Riboviria</taxon>
        <taxon>Orthornavirae</taxon>
        <taxon>Kitrinoviricota</taxon>
        <taxon>Tolucaviricetes</taxon>
        <taxon>Tolivirales</taxon>
        <taxon>Tombusviridae</taxon>
        <taxon>Procedovirinae</taxon>
        <taxon>Tombusvirus</taxon>
        <taxon>Tombusvirus cynarae</taxon>
    </lineage>
</organism>
<sequence>MDTEYEQVNKPWSELYKETTLGNKLMVNVGMEDQEVPLLGSNFLTKVRVGLSGGYITMRRIRIKIIPLVSRKAGVSGKLYLRDISDTTGRKLHCTESLDLGREIRLTMQHLDFSVSTRSDVPIVFGFEELVSPFLEGRELFSIYVRWQFGLSKNCYSLPQSKWKVMYQEDALKVLKPSKKKASRTDSSV</sequence>
<dbReference type="EMBL" id="X51456">
    <property type="protein sequence ID" value="CAA35822.1"/>
    <property type="molecule type" value="Genomic_RNA"/>
</dbReference>
<dbReference type="PIR" id="S08429">
    <property type="entry name" value="NKVGAC"/>
</dbReference>
<dbReference type="GO" id="GO:0033644">
    <property type="term" value="C:host cell membrane"/>
    <property type="evidence" value="ECO:0007669"/>
    <property type="project" value="UniProtKB-SubCell"/>
</dbReference>
<dbReference type="GO" id="GO:0016020">
    <property type="term" value="C:membrane"/>
    <property type="evidence" value="ECO:0007669"/>
    <property type="project" value="UniProtKB-KW"/>
</dbReference>
<dbReference type="GO" id="GO:0019028">
    <property type="term" value="C:viral capsid"/>
    <property type="evidence" value="ECO:0007669"/>
    <property type="project" value="InterPro"/>
</dbReference>
<dbReference type="GO" id="GO:0003723">
    <property type="term" value="F:RNA binding"/>
    <property type="evidence" value="ECO:0007669"/>
    <property type="project" value="UniProtKB-KW"/>
</dbReference>
<dbReference type="GO" id="GO:0046740">
    <property type="term" value="P:transport of virus in host, cell to cell"/>
    <property type="evidence" value="ECO:0007669"/>
    <property type="project" value="UniProtKB-KW"/>
</dbReference>
<dbReference type="InterPro" id="IPR005332">
    <property type="entry name" value="TBSV_p22"/>
</dbReference>
<dbReference type="Pfam" id="PF03558">
    <property type="entry name" value="TBSV_P22"/>
    <property type="match status" value="1"/>
</dbReference>
<comment type="function">
    <text evidence="1">Transports viral genome to neighboring plant cells directly through plasmosdesmata, without any budding. The movement protein allows efficient cell to cell propagation, by bypassing the host cell wall barrier (By similarity).</text>
</comment>
<comment type="subcellular location">
    <subcellularLocation>
        <location evidence="1">Host membrane</location>
    </subcellularLocation>
</comment>
<comment type="similarity">
    <text evidence="2">Belongs to the tombusvirus/aureusvirus movement protein p22 family.</text>
</comment>
<gene>
    <name type="ORF">ORF3</name>
</gene>
<name>MVP_AMCV</name>
<accession>P15961</accession>
<protein>
    <recommendedName>
        <fullName>Movement protein</fullName>
    </recommendedName>
    <alternativeName>
        <fullName>p22</fullName>
    </alternativeName>
</protein>
<organismHost>
    <name type="scientific">Cynara cardunculus var. scolymus</name>
    <name type="common">Globe artichoke</name>
    <name type="synonym">Cynara scolymus</name>
    <dbReference type="NCBI Taxonomy" id="59895"/>
</organismHost>